<accession>C4KIA4</accession>
<organism>
    <name type="scientific">Saccharolobus islandicus (strain M.16.4 / Kamchatka #3)</name>
    <name type="common">Sulfolobus islandicus</name>
    <dbReference type="NCBI Taxonomy" id="426118"/>
    <lineage>
        <taxon>Archaea</taxon>
        <taxon>Thermoproteota</taxon>
        <taxon>Thermoprotei</taxon>
        <taxon>Sulfolobales</taxon>
        <taxon>Sulfolobaceae</taxon>
        <taxon>Saccharolobus</taxon>
    </lineage>
</organism>
<proteinExistence type="inferred from homology"/>
<keyword id="KW-0456">Lyase</keyword>
<keyword id="KW-0819">tRNA processing</keyword>
<name>ENDA_SACI6</name>
<dbReference type="EC" id="4.6.1.16" evidence="1"/>
<dbReference type="EMBL" id="CP001402">
    <property type="protein sequence ID" value="ACR42318.1"/>
    <property type="molecule type" value="Genomic_DNA"/>
</dbReference>
<dbReference type="RefSeq" id="WP_012718943.1">
    <property type="nucleotide sequence ID" value="NC_012726.1"/>
</dbReference>
<dbReference type="SMR" id="C4KIA4"/>
<dbReference type="GeneID" id="84062023"/>
<dbReference type="KEGG" id="sid:M164_1714"/>
<dbReference type="HOGENOM" id="CLU_114393_0_0_2"/>
<dbReference type="Proteomes" id="UP000001479">
    <property type="component" value="Chromosome"/>
</dbReference>
<dbReference type="GO" id="GO:0005737">
    <property type="term" value="C:cytoplasm"/>
    <property type="evidence" value="ECO:0007669"/>
    <property type="project" value="TreeGrafter"/>
</dbReference>
<dbReference type="GO" id="GO:0016829">
    <property type="term" value="F:lyase activity"/>
    <property type="evidence" value="ECO:0007669"/>
    <property type="project" value="UniProtKB-KW"/>
</dbReference>
<dbReference type="GO" id="GO:0003676">
    <property type="term" value="F:nucleic acid binding"/>
    <property type="evidence" value="ECO:0007669"/>
    <property type="project" value="InterPro"/>
</dbReference>
<dbReference type="GO" id="GO:0000213">
    <property type="term" value="F:tRNA-intron endonuclease activity"/>
    <property type="evidence" value="ECO:0007669"/>
    <property type="project" value="UniProtKB-UniRule"/>
</dbReference>
<dbReference type="GO" id="GO:0006388">
    <property type="term" value="P:tRNA splicing, via endonucleolytic cleavage and ligation"/>
    <property type="evidence" value="ECO:0007669"/>
    <property type="project" value="UniProtKB-UniRule"/>
</dbReference>
<dbReference type="CDD" id="cd22363">
    <property type="entry name" value="tRNA-intron_lyase_C"/>
    <property type="match status" value="1"/>
</dbReference>
<dbReference type="FunFam" id="3.40.1350.10:FF:000006">
    <property type="entry name" value="tRNA-splicing endonuclease"/>
    <property type="match status" value="1"/>
</dbReference>
<dbReference type="Gene3D" id="3.40.1350.10">
    <property type="match status" value="1"/>
</dbReference>
<dbReference type="Gene3D" id="3.40.1170.20">
    <property type="entry name" value="tRNA intron endonuclease, N-terminal domain"/>
    <property type="match status" value="1"/>
</dbReference>
<dbReference type="HAMAP" id="MF_01833">
    <property type="entry name" value="EndA_short"/>
    <property type="match status" value="1"/>
</dbReference>
<dbReference type="InterPro" id="IPR011856">
    <property type="entry name" value="tRNA_endonuc-like_dom_sf"/>
</dbReference>
<dbReference type="InterPro" id="IPR036167">
    <property type="entry name" value="tRNA_intron_Endo_cat-like_sf"/>
</dbReference>
<dbReference type="InterPro" id="IPR006677">
    <property type="entry name" value="tRNA_intron_Endonuc_cat-like"/>
</dbReference>
<dbReference type="InterPro" id="IPR006678">
    <property type="entry name" value="tRNA_intron_Endonuc_N"/>
</dbReference>
<dbReference type="InterPro" id="IPR036740">
    <property type="entry name" value="tRNA_intron_Endonuc_N_sf"/>
</dbReference>
<dbReference type="InterPro" id="IPR006676">
    <property type="entry name" value="tRNA_splic"/>
</dbReference>
<dbReference type="InterPro" id="IPR016442">
    <property type="entry name" value="tRNA_splic_arch_short"/>
</dbReference>
<dbReference type="NCBIfam" id="TIGR00324">
    <property type="entry name" value="endA"/>
    <property type="match status" value="1"/>
</dbReference>
<dbReference type="PANTHER" id="PTHR21227">
    <property type="entry name" value="TRNA-SPLICING ENDONUCLEASE SUBUNIT SEN2"/>
    <property type="match status" value="1"/>
</dbReference>
<dbReference type="PANTHER" id="PTHR21227:SF0">
    <property type="entry name" value="TRNA-SPLICING ENDONUCLEASE SUBUNIT SEN2"/>
    <property type="match status" value="1"/>
</dbReference>
<dbReference type="Pfam" id="PF01974">
    <property type="entry name" value="tRNA_int_endo"/>
    <property type="match status" value="1"/>
</dbReference>
<dbReference type="Pfam" id="PF02778">
    <property type="entry name" value="tRNA_int_endo_N"/>
    <property type="match status" value="1"/>
</dbReference>
<dbReference type="PIRSF" id="PIRSF005285">
    <property type="entry name" value="tRNA_splic_archaea"/>
    <property type="match status" value="1"/>
</dbReference>
<dbReference type="SUPFAM" id="SSF53032">
    <property type="entry name" value="tRNA-intron endonuclease catalytic domain-like"/>
    <property type="match status" value="1"/>
</dbReference>
<dbReference type="SUPFAM" id="SSF55267">
    <property type="entry name" value="tRNA-intron endonuclease N-terminal domain-like"/>
    <property type="match status" value="1"/>
</dbReference>
<comment type="function">
    <text evidence="1">Endonuclease that removes tRNA introns. Cleaves pre-tRNA at the 5'- and 3'-splice sites to release the intron. The products are an intron and two tRNA half-molecules bearing 2',3' cyclic phosphate and 5'-OH termini. Recognizes a pseudosymmetric substrate in which 2 bulged loops of 3 bases are separated by a stem of 4 bp.</text>
</comment>
<comment type="catalytic activity">
    <reaction evidence="1">
        <text>pretRNA = a 3'-half-tRNA molecule with a 5'-OH end + a 5'-half-tRNA molecule with a 2',3'-cyclic phosphate end + an intron with a 2',3'-cyclic phosphate and a 5'-hydroxyl terminus.</text>
        <dbReference type="EC" id="4.6.1.16"/>
    </reaction>
</comment>
<comment type="subunit">
    <text evidence="1">Homotetramer; although the tetramer contains four active sites, only two participate in the cleavage. Therefore, it should be considered as a dimer of dimers.</text>
</comment>
<comment type="similarity">
    <text evidence="1">Belongs to the tRNA-intron endonuclease family. Archaeal short subfamily.</text>
</comment>
<reference key="1">
    <citation type="journal article" date="2009" name="Proc. Natl. Acad. Sci. U.S.A.">
        <title>Biogeography of the Sulfolobus islandicus pan-genome.</title>
        <authorList>
            <person name="Reno M.L."/>
            <person name="Held N.L."/>
            <person name="Fields C.J."/>
            <person name="Burke P.V."/>
            <person name="Whitaker R.J."/>
        </authorList>
    </citation>
    <scope>NUCLEOTIDE SEQUENCE [LARGE SCALE GENOMIC DNA]</scope>
    <source>
        <strain>M.16.4 / Kamchatka #3</strain>
    </source>
</reference>
<evidence type="ECO:0000255" key="1">
    <source>
        <dbReference type="HAMAP-Rule" id="MF_01833"/>
    </source>
</evidence>
<gene>
    <name evidence="1" type="primary">endA</name>
    <name type="ordered locus">M164_1714</name>
</gene>
<feature type="chain" id="PRO_1000216080" description="tRNA-splicing endonuclease">
    <location>
        <begin position="1"/>
        <end position="182"/>
    </location>
</feature>
<feature type="active site" evidence="1">
    <location>
        <position position="119"/>
    </location>
</feature>
<feature type="active site" evidence="1">
    <location>
        <position position="127"/>
    </location>
</feature>
<feature type="active site" evidence="1">
    <location>
        <position position="158"/>
    </location>
</feature>
<protein>
    <recommendedName>
        <fullName evidence="1">tRNA-splicing endonuclease</fullName>
        <ecNumber evidence="1">4.6.1.16</ecNumber>
    </recommendedName>
    <alternativeName>
        <fullName evidence="1">tRNA-intron endonuclease</fullName>
    </alternativeName>
</protein>
<sequence length="182" mass="20798">MVKALLVGSKVLIPNVDESRYIYSNGFYGKAIGISKPKGPKDIIRPLELSLIESVYLAKKGLIKVIDKNGEVLEYEKLYEYSSKIINKFDIMYRVYEDLREKGFIVRSGVKYGADFAVYTLGPGLEHAPYVVIAVDIDEEITPHELLSFGRVSHSTRKRLVLALVDRKSESVRYIMFKWVKM</sequence>